<feature type="chain" id="PRO_0000459984" description="AA9 family lytic polysaccharide monooxygenase A">
    <location>
        <begin position="1" status="less than"/>
        <end position="280"/>
    </location>
</feature>
<feature type="propeptide" id="PRO_0000459985" description="Removed in mature form" evidence="4">
    <location>
        <begin position="281"/>
        <end position="351"/>
    </location>
</feature>
<feature type="binding site" evidence="3">
    <location>
        <position position="1"/>
    </location>
    <ligand>
        <name>Cu(2+)</name>
        <dbReference type="ChEBI" id="CHEBI:29036"/>
        <note>catalytic</note>
    </ligand>
</feature>
<feature type="binding site" evidence="3">
    <location>
        <position position="86"/>
    </location>
    <ligand>
        <name>Cu(2+)</name>
        <dbReference type="ChEBI" id="CHEBI:29036"/>
        <note>catalytic</note>
    </ligand>
</feature>
<feature type="binding site" evidence="2">
    <location>
        <position position="164"/>
    </location>
    <ligand>
        <name>O2</name>
        <dbReference type="ChEBI" id="CHEBI:15379"/>
    </ligand>
</feature>
<feature type="binding site" evidence="2">
    <location>
        <position position="173"/>
    </location>
    <ligand>
        <name>O2</name>
        <dbReference type="ChEBI" id="CHEBI:15379"/>
    </ligand>
</feature>
<feature type="binding site" evidence="3">
    <location>
        <position position="175"/>
    </location>
    <ligand>
        <name>Cu(2+)</name>
        <dbReference type="ChEBI" id="CHEBI:29036"/>
        <note>catalytic</note>
    </ligand>
</feature>
<feature type="lipid moiety-binding region" description="GPI-anchor amidated serine" evidence="4">
    <location>
        <position position="280"/>
    </location>
</feature>
<feature type="glycosylation site" description="N-linked (GlcNAc...) asparagine" evidence="5">
    <location>
        <position position="53"/>
    </location>
</feature>
<feature type="glycosylation site" description="N-linked (GlcNAc...) asparagine" evidence="5">
    <location>
        <position position="138"/>
    </location>
</feature>
<feature type="disulfide bond" evidence="1">
    <location>
        <begin position="52"/>
        <end position="178"/>
    </location>
</feature>
<feature type="splice variant" id="VSP_062263" description="In isoform LPMO9A-1." evidence="6">
    <original>SITSYPIPGPPVWTSNEAFSGGSSSSAAASSTAVASSTADSSSSAAATQSSSAAASGSAAPSSSAIGTSTASSAAASGTAIVDANTCMNNYNKCIDAGQPDPDWSGCTATKDACLAGATYQRLARSGTLGRLSF</original>
    <variation>KHRGDVIRQILTQINS</variation>
    <location>
        <begin position="218"/>
        <end position="351"/>
    </location>
</feature>
<feature type="non-terminal residue" evidence="8">
    <location>
        <position position="1"/>
    </location>
</feature>
<reference key="1">
    <citation type="journal article" date="2016" name="Appl. Environ. Microbiol.">
        <title>A Lytic Polysaccharide Monooxygenase with Broad Xyloglucan Specificity from the Brown-Rot Fungus Gloeophyllum trabeum and Its Action on Cellulose-Xyloglucan Complexes.</title>
        <authorList>
            <person name="Kojima Y."/>
            <person name="Varnai A."/>
            <person name="Ishida T."/>
            <person name="Sunagawa N."/>
            <person name="Petrovic D.M."/>
            <person name="Igarashi K."/>
            <person name="Jellison J."/>
            <person name="Goodell B."/>
            <person name="Alfredsen G."/>
            <person name="Westereng B."/>
            <person name="Eijsink V.G.H."/>
            <person name="Yoshida M."/>
        </authorList>
    </citation>
    <scope>NUCLEOTIDE SEQUENCE [MRNA] (ISOFORMS LPMO9A-2 AND LPMO9A-1)</scope>
    <scope>FUNCTION</scope>
    <scope>CATALYTIC ACTIVITY</scope>
    <source>
        <strain>NBRC 6430</strain>
    </source>
</reference>
<gene>
    <name evidence="7" type="primary">LPMO9A</name>
</gene>
<accession>A0A1C9ZP88</accession>
<accession>A0A1C9ZMC5</accession>
<evidence type="ECO:0000250" key="1">
    <source>
        <dbReference type="UniProtKB" id="A0A5J6BJN2"/>
    </source>
</evidence>
<evidence type="ECO:0000250" key="2">
    <source>
        <dbReference type="UniProtKB" id="Q1K8B6"/>
    </source>
</evidence>
<evidence type="ECO:0000250" key="3">
    <source>
        <dbReference type="UniProtKB" id="Q7Z9M7"/>
    </source>
</evidence>
<evidence type="ECO:0000255" key="4"/>
<evidence type="ECO:0000255" key="5">
    <source>
        <dbReference type="PROSITE-ProRule" id="PRU00498"/>
    </source>
</evidence>
<evidence type="ECO:0000269" key="6">
    <source>
    </source>
</evidence>
<evidence type="ECO:0000303" key="7">
    <source>
    </source>
</evidence>
<evidence type="ECO:0000305" key="8"/>
<comment type="function">
    <text evidence="6">Lytic polysaccharide monooxygenase (LPMO) that depolymerizes crystalline and amorphous polysaccharides via the oxidation of scissile alpha- or beta-(1-4)-glycosidic bonds, yielding C1 or C4 oxidation products (PubMed:27590806). Catalysis by LPMOs requires the reduction of the active-site copper from Cu(II) to Cu(I) by a reducing agent and H(2)O(2) or O(2) as a cosubstrate (PubMed:27590806).</text>
</comment>
<comment type="function">
    <molecule>Isoform LPMO9A-2</molecule>
    <text evidence="6">Has broad specificity, cleaving at any position along the beta-glucan backbone of xyloglucan, regardless of substitutions (PubMed:27590806). Shows minor activity on glucomannan (PubMed:27590806).</text>
</comment>
<comment type="catalytic activity">
    <reaction evidence="6">
        <text>[(1-&gt;4)-beta-D-glucosyl]n+m + reduced acceptor + O2 = 4-dehydro-beta-D-glucosyl-[(1-&gt;4)-beta-D-glucosyl]n-1 + [(1-&gt;4)-beta-D-glucosyl]m + acceptor + H2O.</text>
        <dbReference type="EC" id="1.14.99.56"/>
    </reaction>
</comment>
<comment type="cofactor">
    <cofactor evidence="2">
        <name>Cu(2+)</name>
        <dbReference type="ChEBI" id="CHEBI:29036"/>
    </cofactor>
    <text evidence="2">Binds 1 copper ion per subunit.</text>
</comment>
<comment type="subcellular location">
    <subcellularLocation>
        <location evidence="4">Cell membrane</location>
        <topology evidence="4">Lipid-anchor</topology>
        <topology evidence="4">GPI-anchor</topology>
    </subcellularLocation>
</comment>
<comment type="alternative products">
    <event type="alternative splicing"/>
    <isoform>
        <id>A0A1C9ZP88-1</id>
        <name>LPMO9A-2</name>
        <sequence type="displayed"/>
    </isoform>
    <isoform>
        <id>A0A1C9ZP88-2</id>
        <name>LPMO9A-1</name>
        <sequence type="described" ref="VSP_062263"/>
    </isoform>
</comment>
<comment type="biotechnology">
    <text evidence="2">Lignocellulose is the most abundant polymeric composite on Earth and is a recalcitrant but promising renewable substrate for industrial biotechnology applications. Together with cellobiose dehydrogenases (CDHs) an enzymatic system capable of oxidative cellulose cleavage is formed, which increases the efficiency of cellulases and put LPMOs at focus of biofuel research.</text>
</comment>
<comment type="similarity">
    <text evidence="8">Belongs to the polysaccharide monooxygenase AA9 family.</text>
</comment>
<keyword id="KW-0025">Alternative splicing</keyword>
<keyword id="KW-0119">Carbohydrate metabolism</keyword>
<keyword id="KW-1003">Cell membrane</keyword>
<keyword id="KW-0136">Cellulose degradation</keyword>
<keyword id="KW-0186">Copper</keyword>
<keyword id="KW-1015">Disulfide bond</keyword>
<keyword id="KW-0325">Glycoprotein</keyword>
<keyword id="KW-0336">GPI-anchor</keyword>
<keyword id="KW-0449">Lipoprotein</keyword>
<keyword id="KW-0472">Membrane</keyword>
<keyword id="KW-0479">Metal-binding</keyword>
<keyword id="KW-0503">Monooxygenase</keyword>
<keyword id="KW-0560">Oxidoreductase</keyword>
<keyword id="KW-0624">Polysaccharide degradation</keyword>
<organism>
    <name type="scientific">Gloeophyllum trabeum</name>
    <name type="common">Brown rot fungus</name>
    <name type="synonym">Agaricus trabeus</name>
    <dbReference type="NCBI Taxonomy" id="104355"/>
    <lineage>
        <taxon>Eukaryota</taxon>
        <taxon>Fungi</taxon>
        <taxon>Dikarya</taxon>
        <taxon>Basidiomycota</taxon>
        <taxon>Agaricomycotina</taxon>
        <taxon>Agaricomycetes</taxon>
        <taxon>Gloeophyllales</taxon>
        <taxon>Gloeophyllaceae</taxon>
        <taxon>Gloeophyllum</taxon>
    </lineage>
</organism>
<protein>
    <recommendedName>
        <fullName evidence="7">AA9 family lytic polysaccharide monooxygenase A</fullName>
        <shortName evidence="7">LPMO9A</shortName>
        <ecNumber evidence="6">1.14.99.56</ecNumber>
    </recommendedName>
    <alternativeName>
        <fullName evidence="8">Cellulase LPMO9A</fullName>
    </alternativeName>
    <alternativeName>
        <fullName evidence="8">Endo-beta-1,4-glucanase LPMO9A</fullName>
        <shortName evidence="8">Endoglucanase LPMO9A</shortName>
    </alternativeName>
    <alternativeName>
        <fullName evidence="8">Glycosyl hydrolase 61 family protein LPMO9A</fullName>
    </alternativeName>
</protein>
<name>LP9A_GLOTR</name>
<proteinExistence type="evidence at protein level"/>
<sequence length="351" mass="36019">HGYVDQVTIGGQVYTGYQPYQDPYESPVPQRIERAIPGNGPVEDLTLLDIQCNGSGGSGTKPAALIASAAAGDEIAFHWTTWPSSHVGPVITYMGKVPSNTDITSYSPTGSDVIWFKIDEAGYENGKWAATDIMSAQNSTWTVTIPKALAPGQYIVRHEIIALHQAETYPGAQFYPDCFQVQVTGPGTETPTSQALVSFPGGYTPTTPGITFNVYSGSITSYPIPGPPVWTSNEAFSGGSSSSAAASSTAVASSTADSSSSAAATQSSSAAASGSAAPSSSAIGTSTASSAAASGTAIVDANTCMNNYNKCIDAGQPDPDWSGCTATKDACLAGATYQRLARSGTLGRLSF</sequence>
<dbReference type="EC" id="1.14.99.56" evidence="6"/>
<dbReference type="EMBL" id="LC157847">
    <property type="protein sequence ID" value="BAV57611.1"/>
    <property type="molecule type" value="mRNA"/>
</dbReference>
<dbReference type="EMBL" id="LC157848">
    <property type="protein sequence ID" value="BAV57612.1"/>
    <property type="molecule type" value="mRNA"/>
</dbReference>
<dbReference type="SMR" id="A0A1C9ZP88"/>
<dbReference type="BRENDA" id="1.14.99.B10">
    <property type="organism ID" value="2452"/>
</dbReference>
<dbReference type="GO" id="GO:0005886">
    <property type="term" value="C:plasma membrane"/>
    <property type="evidence" value="ECO:0007669"/>
    <property type="project" value="UniProtKB-SubCell"/>
</dbReference>
<dbReference type="GO" id="GO:0098552">
    <property type="term" value="C:side of membrane"/>
    <property type="evidence" value="ECO:0007669"/>
    <property type="project" value="UniProtKB-KW"/>
</dbReference>
<dbReference type="GO" id="GO:0046872">
    <property type="term" value="F:metal ion binding"/>
    <property type="evidence" value="ECO:0007669"/>
    <property type="project" value="UniProtKB-KW"/>
</dbReference>
<dbReference type="GO" id="GO:0004497">
    <property type="term" value="F:monooxygenase activity"/>
    <property type="evidence" value="ECO:0007669"/>
    <property type="project" value="UniProtKB-KW"/>
</dbReference>
<dbReference type="GO" id="GO:0030245">
    <property type="term" value="P:cellulose catabolic process"/>
    <property type="evidence" value="ECO:0007669"/>
    <property type="project" value="UniProtKB-KW"/>
</dbReference>
<dbReference type="CDD" id="cd21175">
    <property type="entry name" value="LPMO_AA9"/>
    <property type="match status" value="1"/>
</dbReference>
<dbReference type="Gene3D" id="2.70.50.70">
    <property type="match status" value="1"/>
</dbReference>
<dbReference type="InterPro" id="IPR049892">
    <property type="entry name" value="AA9"/>
</dbReference>
<dbReference type="InterPro" id="IPR005103">
    <property type="entry name" value="AA9_LPMO"/>
</dbReference>
<dbReference type="PANTHER" id="PTHR33353:SF6">
    <property type="entry name" value="ENDOGLUCANASE IV"/>
    <property type="match status" value="1"/>
</dbReference>
<dbReference type="PANTHER" id="PTHR33353">
    <property type="entry name" value="PUTATIVE (AFU_ORTHOLOGUE AFUA_1G12560)-RELATED"/>
    <property type="match status" value="1"/>
</dbReference>
<dbReference type="Pfam" id="PF03443">
    <property type="entry name" value="AA9"/>
    <property type="match status" value="1"/>
</dbReference>